<comment type="function">
    <text evidence="1">DNA-binding protein which is required for efficient transcription-coupled nucleotide excision repair.</text>
</comment>
<comment type="subcellular location">
    <subcellularLocation>
        <location evidence="1">Nucleus</location>
    </subcellularLocation>
</comment>
<comment type="similarity">
    <text evidence="3">Belongs to the STK19 family.</text>
</comment>
<comment type="caution">
    <text evidence="1">Was originally reported to be a serine/threonine-protein kinase. However, later studies have shown that the protein does not have kinase activity and is involved in transcription-coupled nucleotide excision repair.</text>
</comment>
<accession>Q54WC0</accession>
<evidence type="ECO:0000250" key="1">
    <source>
        <dbReference type="UniProtKB" id="P49842"/>
    </source>
</evidence>
<evidence type="ECO:0000256" key="2">
    <source>
        <dbReference type="SAM" id="MobiDB-lite"/>
    </source>
</evidence>
<evidence type="ECO:0000305" key="3"/>
<dbReference type="EMBL" id="AAFI02000032">
    <property type="protein sequence ID" value="EAL67560.1"/>
    <property type="molecule type" value="Genomic_DNA"/>
</dbReference>
<dbReference type="RefSeq" id="XP_641538.1">
    <property type="nucleotide sequence ID" value="XM_636446.1"/>
</dbReference>
<dbReference type="SMR" id="Q54WC0"/>
<dbReference type="STRING" id="44689.Q54WC0"/>
<dbReference type="PaxDb" id="44689-DDB0220709"/>
<dbReference type="EnsemblProtists" id="EAL67560">
    <property type="protein sequence ID" value="EAL67560"/>
    <property type="gene ID" value="DDB_G0279761"/>
</dbReference>
<dbReference type="GeneID" id="8622211"/>
<dbReference type="KEGG" id="ddi:DDB_G0279761"/>
<dbReference type="dictyBase" id="DDB_G0279761"/>
<dbReference type="VEuPathDB" id="AmoebaDB:DDB_G0279761"/>
<dbReference type="eggNOG" id="ENOG502REI5">
    <property type="taxonomic scope" value="Eukaryota"/>
</dbReference>
<dbReference type="HOGENOM" id="CLU_706820_0_0_1"/>
<dbReference type="InParanoid" id="Q54WC0"/>
<dbReference type="OMA" id="SWWIAIP"/>
<dbReference type="PhylomeDB" id="Q54WC0"/>
<dbReference type="PRO" id="PR:Q54WC0"/>
<dbReference type="Proteomes" id="UP000002195">
    <property type="component" value="Chromosome 3"/>
</dbReference>
<dbReference type="GO" id="GO:0005524">
    <property type="term" value="F:ATP binding"/>
    <property type="evidence" value="ECO:0007669"/>
    <property type="project" value="UniProtKB-KW"/>
</dbReference>
<dbReference type="GO" id="GO:0106310">
    <property type="term" value="F:protein serine kinase activity"/>
    <property type="evidence" value="ECO:0007669"/>
    <property type="project" value="RHEA"/>
</dbReference>
<dbReference type="GO" id="GO:0004674">
    <property type="term" value="F:protein serine/threonine kinase activity"/>
    <property type="evidence" value="ECO:0007669"/>
    <property type="project" value="UniProtKB-KW"/>
</dbReference>
<dbReference type="GO" id="GO:0046579">
    <property type="term" value="P:positive regulation of Ras protein signal transduction"/>
    <property type="evidence" value="ECO:0000318"/>
    <property type="project" value="GO_Central"/>
</dbReference>
<dbReference type="InterPro" id="IPR018865">
    <property type="entry name" value="STK19-like"/>
</dbReference>
<dbReference type="PANTHER" id="PTHR15243">
    <property type="entry name" value="SERINE/THREONINE-PROTEIN KINASE 19"/>
    <property type="match status" value="1"/>
</dbReference>
<dbReference type="PANTHER" id="PTHR15243:SF0">
    <property type="entry name" value="SERINE_THREONINE-PROTEIN KINASE 19"/>
    <property type="match status" value="1"/>
</dbReference>
<dbReference type="Pfam" id="PF10494">
    <property type="entry name" value="Stk19"/>
    <property type="match status" value="1"/>
</dbReference>
<proteinExistence type="inferred from homology"/>
<gene>
    <name evidence="1" type="primary">WHR1</name>
    <name type="synonym">G11</name>
    <name evidence="1" type="synonym">STK19</name>
    <name type="ORF">DDB_G0279761</name>
</gene>
<keyword id="KW-0227">DNA damage</keyword>
<keyword id="KW-0234">DNA repair</keyword>
<keyword id="KW-0238">DNA-binding</keyword>
<keyword id="KW-0539">Nucleus</keyword>
<keyword id="KW-1185">Reference proteome</keyword>
<reference key="1">
    <citation type="journal article" date="2005" name="Nature">
        <title>The genome of the social amoeba Dictyostelium discoideum.</title>
        <authorList>
            <person name="Eichinger L."/>
            <person name="Pachebat J.A."/>
            <person name="Gloeckner G."/>
            <person name="Rajandream M.A."/>
            <person name="Sucgang R."/>
            <person name="Berriman M."/>
            <person name="Song J."/>
            <person name="Olsen R."/>
            <person name="Szafranski K."/>
            <person name="Xu Q."/>
            <person name="Tunggal B."/>
            <person name="Kummerfeld S."/>
            <person name="Madera M."/>
            <person name="Konfortov B.A."/>
            <person name="Rivero F."/>
            <person name="Bankier A.T."/>
            <person name="Lehmann R."/>
            <person name="Hamlin N."/>
            <person name="Davies R."/>
            <person name="Gaudet P."/>
            <person name="Fey P."/>
            <person name="Pilcher K."/>
            <person name="Chen G."/>
            <person name="Saunders D."/>
            <person name="Sodergren E.J."/>
            <person name="Davis P."/>
            <person name="Kerhornou A."/>
            <person name="Nie X."/>
            <person name="Hall N."/>
            <person name="Anjard C."/>
            <person name="Hemphill L."/>
            <person name="Bason N."/>
            <person name="Farbrother P."/>
            <person name="Desany B."/>
            <person name="Just E."/>
            <person name="Morio T."/>
            <person name="Rost R."/>
            <person name="Churcher C.M."/>
            <person name="Cooper J."/>
            <person name="Haydock S."/>
            <person name="van Driessche N."/>
            <person name="Cronin A."/>
            <person name="Goodhead I."/>
            <person name="Muzny D.M."/>
            <person name="Mourier T."/>
            <person name="Pain A."/>
            <person name="Lu M."/>
            <person name="Harper D."/>
            <person name="Lindsay R."/>
            <person name="Hauser H."/>
            <person name="James K.D."/>
            <person name="Quiles M."/>
            <person name="Madan Babu M."/>
            <person name="Saito T."/>
            <person name="Buchrieser C."/>
            <person name="Wardroper A."/>
            <person name="Felder M."/>
            <person name="Thangavelu M."/>
            <person name="Johnson D."/>
            <person name="Knights A."/>
            <person name="Loulseged H."/>
            <person name="Mungall K.L."/>
            <person name="Oliver K."/>
            <person name="Price C."/>
            <person name="Quail M.A."/>
            <person name="Urushihara H."/>
            <person name="Hernandez J."/>
            <person name="Rabbinowitsch E."/>
            <person name="Steffen D."/>
            <person name="Sanders M."/>
            <person name="Ma J."/>
            <person name="Kohara Y."/>
            <person name="Sharp S."/>
            <person name="Simmonds M.N."/>
            <person name="Spiegler S."/>
            <person name="Tivey A."/>
            <person name="Sugano S."/>
            <person name="White B."/>
            <person name="Walker D."/>
            <person name="Woodward J.R."/>
            <person name="Winckler T."/>
            <person name="Tanaka Y."/>
            <person name="Shaulsky G."/>
            <person name="Schleicher M."/>
            <person name="Weinstock G.M."/>
            <person name="Rosenthal A."/>
            <person name="Cox E.C."/>
            <person name="Chisholm R.L."/>
            <person name="Gibbs R.A."/>
            <person name="Loomis W.F."/>
            <person name="Platzer M."/>
            <person name="Kay R.R."/>
            <person name="Williams J.G."/>
            <person name="Dear P.H."/>
            <person name="Noegel A.A."/>
            <person name="Barrell B.G."/>
            <person name="Kuspa A."/>
        </authorList>
    </citation>
    <scope>NUCLEOTIDE SEQUENCE [LARGE SCALE GENOMIC DNA]</scope>
    <source>
        <strain>AX4</strain>
    </source>
</reference>
<reference key="2">
    <citation type="journal article" date="2006" name="PLoS Genet.">
        <title>The dictyostelium kinome -- analysis of the protein kinases from a simple model organism.</title>
        <authorList>
            <person name="Goldberg J.M."/>
            <person name="Manning G."/>
            <person name="Liu A."/>
            <person name="Fey P."/>
            <person name="Pilcher K.E."/>
            <person name="Xu Y."/>
            <person name="Smith J.L."/>
        </authorList>
    </citation>
    <scope>GENE FAMILY</scope>
    <scope>NOMENCLATURE</scope>
</reference>
<organism>
    <name type="scientific">Dictyostelium discoideum</name>
    <name type="common">Social amoeba</name>
    <dbReference type="NCBI Taxonomy" id="44689"/>
    <lineage>
        <taxon>Eukaryota</taxon>
        <taxon>Amoebozoa</taxon>
        <taxon>Evosea</taxon>
        <taxon>Eumycetozoa</taxon>
        <taxon>Dictyostelia</taxon>
        <taxon>Dictyosteliales</taxon>
        <taxon>Dictyosteliaceae</taxon>
        <taxon>Dictyostelium</taxon>
    </lineage>
</organism>
<protein>
    <recommendedName>
        <fullName evidence="1">Winged helix repair factor 1</fullName>
    </recommendedName>
    <alternativeName>
        <fullName evidence="3">Inactive serine/threonine-protein kinase 19 homolog</fullName>
    </alternativeName>
</protein>
<sequence length="391" mass="44813">MNIKRNQNNSIDNNLSIDSNPSPIKKVKNHLDFSKSYNEDDEPSNDLDLSFNTSNISNLSNINGEEDNDDDDRENEPKDIDNPNPSITTTTATSTNSTLVKKTNNFLDFNFAFEPNKEEDDEEEDLNISLTTEDILLSQIELLKAEWDYITYNKSPPLVLQSVYHQSNKDSERSIQILKKKGTIRLFQIATSLNDYCIIITTDYIKNIELLKIENTTIPNKIKPETLTNNMKNSSPIKSAPIDTILLKRSEILDLFIKKLIPNFNEVSITRSKLFQLLSIVNDDHHQQENIITHLVQCGLLLQKDDCTFTFSVPGAGGFFLNLMKGRKEILSNIQRLKYKEILKKDLLKKKLKYSNVQMQLLIKDLLGLNKIKIIPTTQGELIRCVQFDEL</sequence>
<name>WHR1_DICDI</name>
<feature type="chain" id="PRO_0000377459" description="Winged helix repair factor 1">
    <location>
        <begin position="1"/>
        <end position="391"/>
    </location>
</feature>
<feature type="region of interest" description="Disordered" evidence="2">
    <location>
        <begin position="1"/>
        <end position="95"/>
    </location>
</feature>
<feature type="compositionally biased region" description="Low complexity" evidence="2">
    <location>
        <begin position="1"/>
        <end position="24"/>
    </location>
</feature>
<feature type="compositionally biased region" description="Low complexity" evidence="2">
    <location>
        <begin position="49"/>
        <end position="63"/>
    </location>
</feature>
<feature type="compositionally biased region" description="Acidic residues" evidence="2">
    <location>
        <begin position="64"/>
        <end position="74"/>
    </location>
</feature>
<feature type="compositionally biased region" description="Low complexity" evidence="2">
    <location>
        <begin position="82"/>
        <end position="95"/>
    </location>
</feature>